<keyword id="KW-0342">GTP-binding</keyword>
<keyword id="KW-0378">Hydrolase</keyword>
<keyword id="KW-0460">Magnesium</keyword>
<keyword id="KW-0479">Metal-binding</keyword>
<keyword id="KW-0496">Mitochondrion</keyword>
<keyword id="KW-0547">Nucleotide-binding</keyword>
<keyword id="KW-0630">Potassium</keyword>
<keyword id="KW-1185">Reference proteome</keyword>
<keyword id="KW-0809">Transit peptide</keyword>
<keyword id="KW-0819">tRNA processing</keyword>
<reference key="1">
    <citation type="journal article" date="2004" name="Genome Res.">
        <title>The status, quality, and expansion of the NIH full-length cDNA project: the Mammalian Gene Collection (MGC).</title>
        <authorList>
            <consortium name="The MGC Project Team"/>
        </authorList>
    </citation>
    <scope>NUCLEOTIDE SEQUENCE [LARGE SCALE MRNA]</scope>
    <source>
        <tissue>Heart</tissue>
    </source>
</reference>
<organism>
    <name type="scientific">Rattus norvegicus</name>
    <name type="common">Rat</name>
    <dbReference type="NCBI Taxonomy" id="10116"/>
    <lineage>
        <taxon>Eukaryota</taxon>
        <taxon>Metazoa</taxon>
        <taxon>Chordata</taxon>
        <taxon>Craniata</taxon>
        <taxon>Vertebrata</taxon>
        <taxon>Euteleostomi</taxon>
        <taxon>Mammalia</taxon>
        <taxon>Eutheria</taxon>
        <taxon>Euarchontoglires</taxon>
        <taxon>Glires</taxon>
        <taxon>Rodentia</taxon>
        <taxon>Myomorpha</taxon>
        <taxon>Muroidea</taxon>
        <taxon>Muridae</taxon>
        <taxon>Murinae</taxon>
        <taxon>Rattus</taxon>
    </lineage>
</organism>
<dbReference type="EC" id="3.6.1.-" evidence="2"/>
<dbReference type="EMBL" id="BC087083">
    <property type="protein sequence ID" value="AAH87083.1"/>
    <property type="molecule type" value="mRNA"/>
</dbReference>
<dbReference type="RefSeq" id="NP_001011919.1">
    <property type="nucleotide sequence ID" value="NM_001011919.1"/>
</dbReference>
<dbReference type="SMR" id="Q5PQQ1"/>
<dbReference type="FunCoup" id="Q5PQQ1">
    <property type="interactions" value="1616"/>
</dbReference>
<dbReference type="STRING" id="10116.ENSRNOP00000057102"/>
<dbReference type="PhosphoSitePlus" id="Q5PQQ1"/>
<dbReference type="PaxDb" id="10116-ENSRNOP00000057102"/>
<dbReference type="Ensembl" id="ENSRNOT00000060355.5">
    <property type="protein sequence ID" value="ENSRNOP00000057102.2"/>
    <property type="gene ID" value="ENSRNOG00000023403.7"/>
</dbReference>
<dbReference type="GeneID" id="290633"/>
<dbReference type="KEGG" id="rno:290633"/>
<dbReference type="UCSC" id="RGD:1305367">
    <property type="organism name" value="rat"/>
</dbReference>
<dbReference type="AGR" id="RGD:1305367"/>
<dbReference type="CTD" id="84705"/>
<dbReference type="RGD" id="1305367">
    <property type="gene designation" value="Gtpbp3"/>
</dbReference>
<dbReference type="eggNOG" id="KOG1191">
    <property type="taxonomic scope" value="Eukaryota"/>
</dbReference>
<dbReference type="GeneTree" id="ENSGT00390000016851"/>
<dbReference type="HOGENOM" id="CLU_019624_3_1_1"/>
<dbReference type="InParanoid" id="Q5PQQ1"/>
<dbReference type="OMA" id="EFHCHGG"/>
<dbReference type="OrthoDB" id="188276at2759"/>
<dbReference type="PhylomeDB" id="Q5PQQ1"/>
<dbReference type="TreeFam" id="TF313153"/>
<dbReference type="PRO" id="PR:Q5PQQ1"/>
<dbReference type="Proteomes" id="UP000002494">
    <property type="component" value="Chromosome 16"/>
</dbReference>
<dbReference type="Bgee" id="ENSRNOG00000023403">
    <property type="expression patterns" value="Expressed in skeletal muscle tissue and 20 other cell types or tissues"/>
</dbReference>
<dbReference type="GO" id="GO:0005737">
    <property type="term" value="C:cytoplasm"/>
    <property type="evidence" value="ECO:0000318"/>
    <property type="project" value="GO_Central"/>
</dbReference>
<dbReference type="GO" id="GO:0005739">
    <property type="term" value="C:mitochondrion"/>
    <property type="evidence" value="ECO:0000250"/>
    <property type="project" value="UniProtKB"/>
</dbReference>
<dbReference type="GO" id="GO:0005525">
    <property type="term" value="F:GTP binding"/>
    <property type="evidence" value="ECO:0007669"/>
    <property type="project" value="UniProtKB-KW"/>
</dbReference>
<dbReference type="GO" id="GO:0003924">
    <property type="term" value="F:GTPase activity"/>
    <property type="evidence" value="ECO:0000250"/>
    <property type="project" value="UniProtKB"/>
</dbReference>
<dbReference type="GO" id="GO:0160236">
    <property type="term" value="F:tRNA 5-taurinomethyluridine synthase activity"/>
    <property type="evidence" value="ECO:0000250"/>
    <property type="project" value="UniProtKB"/>
</dbReference>
<dbReference type="GO" id="GO:0070899">
    <property type="term" value="P:mitochondrial tRNA wobble uridine modification"/>
    <property type="evidence" value="ECO:0000250"/>
    <property type="project" value="UniProtKB"/>
</dbReference>
<dbReference type="GO" id="GO:0030488">
    <property type="term" value="P:tRNA methylation"/>
    <property type="evidence" value="ECO:0000318"/>
    <property type="project" value="GO_Central"/>
</dbReference>
<dbReference type="GO" id="GO:0002098">
    <property type="term" value="P:tRNA wobble uridine modification"/>
    <property type="evidence" value="ECO:0000318"/>
    <property type="project" value="GO_Central"/>
</dbReference>
<dbReference type="CDD" id="cd04164">
    <property type="entry name" value="trmE"/>
    <property type="match status" value="1"/>
</dbReference>
<dbReference type="CDD" id="cd14858">
    <property type="entry name" value="TrmE_N"/>
    <property type="match status" value="1"/>
</dbReference>
<dbReference type="FunFam" id="3.30.1360.120:FF:000007">
    <property type="entry name" value="tRNA modification GTPase GTPBP3, mitochondrial"/>
    <property type="match status" value="1"/>
</dbReference>
<dbReference type="FunFam" id="3.40.50.300:FF:000924">
    <property type="entry name" value="tRNA modification GTPase GTPBP3, mitochondrial"/>
    <property type="match status" value="1"/>
</dbReference>
<dbReference type="Gene3D" id="3.40.50.300">
    <property type="entry name" value="P-loop containing nucleotide triphosphate hydrolases"/>
    <property type="match status" value="1"/>
</dbReference>
<dbReference type="Gene3D" id="3.30.1360.120">
    <property type="entry name" value="Probable tRNA modification gtpase trme, domain 1"/>
    <property type="match status" value="1"/>
</dbReference>
<dbReference type="Gene3D" id="1.20.120.430">
    <property type="entry name" value="tRNA modification GTPase MnmE domain 2"/>
    <property type="match status" value="1"/>
</dbReference>
<dbReference type="HAMAP" id="MF_00379">
    <property type="entry name" value="GTPase_MnmE"/>
    <property type="match status" value="1"/>
</dbReference>
<dbReference type="InterPro" id="IPR031168">
    <property type="entry name" value="G_TrmE"/>
</dbReference>
<dbReference type="InterPro" id="IPR006073">
    <property type="entry name" value="GTP-bd"/>
</dbReference>
<dbReference type="InterPro" id="IPR018948">
    <property type="entry name" value="GTP-bd_TrmE_N"/>
</dbReference>
<dbReference type="InterPro" id="IPR004520">
    <property type="entry name" value="GTPase_MnmE"/>
</dbReference>
<dbReference type="InterPro" id="IPR027368">
    <property type="entry name" value="MnmE_dom2"/>
</dbReference>
<dbReference type="InterPro" id="IPR025867">
    <property type="entry name" value="MnmE_helical"/>
</dbReference>
<dbReference type="InterPro" id="IPR027417">
    <property type="entry name" value="P-loop_NTPase"/>
</dbReference>
<dbReference type="InterPro" id="IPR005225">
    <property type="entry name" value="Small_GTP-bd"/>
</dbReference>
<dbReference type="InterPro" id="IPR027266">
    <property type="entry name" value="TrmE/GcvT_dom1"/>
</dbReference>
<dbReference type="NCBIfam" id="TIGR00450">
    <property type="entry name" value="mnmE_trmE_thdF"/>
    <property type="match status" value="1"/>
</dbReference>
<dbReference type="NCBIfam" id="NF003661">
    <property type="entry name" value="PRK05291.1-3"/>
    <property type="match status" value="1"/>
</dbReference>
<dbReference type="NCBIfam" id="TIGR00231">
    <property type="entry name" value="small_GTP"/>
    <property type="match status" value="1"/>
</dbReference>
<dbReference type="PANTHER" id="PTHR42714">
    <property type="entry name" value="TRNA MODIFICATION GTPASE GTPBP3"/>
    <property type="match status" value="1"/>
</dbReference>
<dbReference type="PANTHER" id="PTHR42714:SF2">
    <property type="entry name" value="TRNA MODIFICATION GTPASE GTPBP3, MITOCHONDRIAL"/>
    <property type="match status" value="1"/>
</dbReference>
<dbReference type="Pfam" id="PF01926">
    <property type="entry name" value="MMR_HSR1"/>
    <property type="match status" value="1"/>
</dbReference>
<dbReference type="Pfam" id="PF12631">
    <property type="entry name" value="MnmE_helical"/>
    <property type="match status" value="1"/>
</dbReference>
<dbReference type="Pfam" id="PF10396">
    <property type="entry name" value="TrmE_N"/>
    <property type="match status" value="1"/>
</dbReference>
<dbReference type="SUPFAM" id="SSF52540">
    <property type="entry name" value="P-loop containing nucleoside triphosphate hydrolases"/>
    <property type="match status" value="1"/>
</dbReference>
<dbReference type="SUPFAM" id="SSF116878">
    <property type="entry name" value="TrmE connector domain"/>
    <property type="match status" value="1"/>
</dbReference>
<dbReference type="PROSITE" id="PS51709">
    <property type="entry name" value="G_TRME"/>
    <property type="match status" value="1"/>
</dbReference>
<accession>Q5PQQ1</accession>
<feature type="transit peptide" description="Mitochondrion" evidence="2">
    <location>
        <begin position="1"/>
        <end position="20"/>
    </location>
</feature>
<feature type="chain" id="PRO_0000280267" description="5-taurinomethyluridine-[tRNA] synthase subunit GTPB3, mitochondrial">
    <location>
        <begin position="21"/>
        <end position="492"/>
    </location>
</feature>
<feature type="domain" description="TrmE-type G">
    <location>
        <begin position="249"/>
        <end position="416"/>
    </location>
</feature>
<feature type="binding site" evidence="2">
    <location>
        <position position="52"/>
    </location>
    <ligand>
        <name>5,10-methylenetetrahydrofolate</name>
        <dbReference type="ChEBI" id="CHEBI:12071"/>
    </ligand>
</feature>
<feature type="binding site" evidence="2">
    <location>
        <position position="112"/>
    </location>
    <ligand>
        <name>5,10-methylenetetrahydrofolate</name>
        <dbReference type="ChEBI" id="CHEBI:12071"/>
    </ligand>
</feature>
<feature type="binding site" evidence="2">
    <location>
        <position position="152"/>
    </location>
    <ligand>
        <name>5,10-methylenetetrahydrofolate</name>
        <dbReference type="ChEBI" id="CHEBI:12071"/>
    </ligand>
</feature>
<feature type="binding site" evidence="3">
    <location>
        <begin position="256"/>
        <end position="263"/>
    </location>
    <ligand>
        <name>GTP</name>
        <dbReference type="ChEBI" id="CHEBI:37565"/>
    </ligand>
</feature>
<feature type="binding site" evidence="1">
    <location>
        <position position="259"/>
    </location>
    <ligand>
        <name>K(+)</name>
        <dbReference type="ChEBI" id="CHEBI:29103"/>
    </ligand>
</feature>
<feature type="binding site" evidence="3">
    <location>
        <position position="263"/>
    </location>
    <ligand>
        <name>Mg(2+)</name>
        <dbReference type="ChEBI" id="CHEBI:18420"/>
    </ligand>
</feature>
<feature type="binding site" evidence="3">
    <location>
        <begin position="282"/>
        <end position="286"/>
    </location>
    <ligand>
        <name>GTP</name>
        <dbReference type="ChEBI" id="CHEBI:37565"/>
    </ligand>
</feature>
<feature type="binding site" evidence="3">
    <location>
        <position position="284"/>
    </location>
    <ligand>
        <name>Mg(2+)</name>
        <dbReference type="ChEBI" id="CHEBI:18420"/>
    </ligand>
</feature>
<feature type="binding site" evidence="3">
    <location>
        <begin position="303"/>
        <end position="306"/>
    </location>
    <ligand>
        <name>GTP</name>
        <dbReference type="ChEBI" id="CHEBI:37565"/>
    </ligand>
</feature>
<feature type="binding site" evidence="3">
    <location>
        <begin position="374"/>
        <end position="377"/>
    </location>
    <ligand>
        <name>GTP</name>
        <dbReference type="ChEBI" id="CHEBI:37565"/>
    </ligand>
</feature>
<feature type="binding site" evidence="2">
    <location>
        <position position="492"/>
    </location>
    <ligand>
        <name>5,10-methylenetetrahydrofolate</name>
        <dbReference type="ChEBI" id="CHEBI:12071"/>
    </ligand>
</feature>
<comment type="function">
    <text evidence="2">GTPase component of the GTPBP3-MTO1 complex that catalyzes the 5-taurinomethyluridine (taum(5)U) modification at the 34th wobble position (U34) of mitochondrial tRNAs (mt-tRNAs), which plays a role in mt-tRNA decoding and mitochondrial translation. Taum(5)U formation on mammalian mt-tRNA requires the presence of both GTPBP3-mediated GTPase activity and MTO1 catalytic activity.</text>
</comment>
<comment type="catalytic activity">
    <reaction evidence="2">
        <text>GTP + H2O = GDP + phosphate + H(+)</text>
        <dbReference type="Rhea" id="RHEA:19669"/>
        <dbReference type="ChEBI" id="CHEBI:15377"/>
        <dbReference type="ChEBI" id="CHEBI:15378"/>
        <dbReference type="ChEBI" id="CHEBI:37565"/>
        <dbReference type="ChEBI" id="CHEBI:43474"/>
        <dbReference type="ChEBI" id="CHEBI:58189"/>
    </reaction>
    <physiologicalReaction direction="left-to-right" evidence="2">
        <dbReference type="Rhea" id="RHEA:19670"/>
    </physiologicalReaction>
</comment>
<comment type="cofactor">
    <cofactor evidence="2">
        <name>K(+)</name>
        <dbReference type="ChEBI" id="CHEBI:29103"/>
    </cofactor>
    <text evidence="2">Forms a homodimer in the presence of potassium.</text>
</comment>
<comment type="subunit">
    <text evidence="2">Homodimer; forms a dimer in the presence of potassium. Interacts with MTO1; forms the GTPBP3-MTO1 complex composed of homodimers of GTPBP3 and MTO1.</text>
</comment>
<comment type="subcellular location">
    <subcellularLocation>
        <location evidence="2">Mitochondrion</location>
    </subcellularLocation>
</comment>
<comment type="similarity">
    <text evidence="4">Belongs to the TRAFAC class TrmE-Era-EngA-EngB-Septin-like GTPase superfamily. TrmE GTPase family.</text>
</comment>
<protein>
    <recommendedName>
        <fullName evidence="2">5-taurinomethyluridine-[tRNA] synthase subunit GTPB3, mitochondrial</fullName>
        <ecNumber evidence="2">3.6.1.-</ecNumber>
    </recommendedName>
    <alternativeName>
        <fullName>GTP-binding protein 3</fullName>
    </alternativeName>
    <alternativeName>
        <fullName>tRNA modification GTPase GTPBP3, mitochondrial</fullName>
    </alternativeName>
</protein>
<name>GTPB3_RAT</name>
<evidence type="ECO:0000250" key="1">
    <source>
        <dbReference type="UniProtKB" id="P25522"/>
    </source>
</evidence>
<evidence type="ECO:0000250" key="2">
    <source>
        <dbReference type="UniProtKB" id="Q969Y2"/>
    </source>
</evidence>
<evidence type="ECO:0000255" key="3">
    <source>
        <dbReference type="PROSITE-ProRule" id="PRU01046"/>
    </source>
</evidence>
<evidence type="ECO:0000305" key="4"/>
<evidence type="ECO:0000312" key="5">
    <source>
        <dbReference type="RGD" id="1305367"/>
    </source>
</evidence>
<sequence>MWRGLSALVTRPASAPLRLCARCSTGAESLVPGSTIFALSSGQGRCAIAVIRTSGPASGLALRSLTALREPPPARSACLRLLRHPCSGEPLDRSLVLWFPGPQSFTGEDCMELHVHGGPAVVSGVLQALGSVPGLRPAKAGEFTRRAFAHGKLSLTEVEGLADLIHAETEAQRRQALRQLDGELSQLCQGWAKTLTKALAHVEAYIDFGEDDNLEEGVLEQVDRDVRALEVALSSHLRDARRGQRLRSGANVVVAGPPNAGKSSLVNLLSQKPVSIVSPEPGTTRDILETPVDLAGFPVLLSDTAGLREGAGAVEQEGVRRARQRLEQADIILGMLDASDLASSSSCSFLDTVVAPLVAQSHDSGRQRLLLLLNKSDLLSANAPASSTALPPHLLLSCHTGAGMDALLQALKTELAAVCGDPSTGPPLLTRARHQYHLQGCLDALGRFQLTTDLALAAEALRQARRQLSHLTGGGGTEEILDLIFQDFCVGK</sequence>
<proteinExistence type="evidence at transcript level"/>
<gene>
    <name evidence="5" type="primary">Gtpbp3</name>
</gene>